<reference key="1">
    <citation type="journal article" date="1988" name="EMBO J.">
        <title>MSS18, a yeast nuclear gene involved in the splicing of intron aI5 beta of the mitochondrial cox1 transcript.</title>
        <authorList>
            <person name="Seraphin B."/>
            <person name="Simon M."/>
            <person name="Faye G."/>
        </authorList>
    </citation>
    <scope>NUCLEOTIDE SEQUENCE [GENOMIC DNA]</scope>
    <scope>FUNCTION</scope>
    <source>
        <strain>ATCC 204510 / AB320</strain>
    </source>
</reference>
<reference key="2">
    <citation type="journal article" date="1997" name="Nature">
        <title>The nucleotide sequence of Saccharomyces cerevisiae chromosome XVI.</title>
        <authorList>
            <person name="Bussey H."/>
            <person name="Storms R.K."/>
            <person name="Ahmed A."/>
            <person name="Albermann K."/>
            <person name="Allen E."/>
            <person name="Ansorge W."/>
            <person name="Araujo R."/>
            <person name="Aparicio A."/>
            <person name="Barrell B.G."/>
            <person name="Badcock K."/>
            <person name="Benes V."/>
            <person name="Botstein D."/>
            <person name="Bowman S."/>
            <person name="Brueckner M."/>
            <person name="Carpenter J."/>
            <person name="Cherry J.M."/>
            <person name="Chung E."/>
            <person name="Churcher C.M."/>
            <person name="Coster F."/>
            <person name="Davis K."/>
            <person name="Davis R.W."/>
            <person name="Dietrich F.S."/>
            <person name="Delius H."/>
            <person name="DiPaolo T."/>
            <person name="Dubois E."/>
            <person name="Duesterhoeft A."/>
            <person name="Duncan M."/>
            <person name="Floeth M."/>
            <person name="Fortin N."/>
            <person name="Friesen J.D."/>
            <person name="Fritz C."/>
            <person name="Goffeau A."/>
            <person name="Hall J."/>
            <person name="Hebling U."/>
            <person name="Heumann K."/>
            <person name="Hilbert H."/>
            <person name="Hillier L.W."/>
            <person name="Hunicke-Smith S."/>
            <person name="Hyman R.W."/>
            <person name="Johnston M."/>
            <person name="Kalman S."/>
            <person name="Kleine K."/>
            <person name="Komp C."/>
            <person name="Kurdi O."/>
            <person name="Lashkari D."/>
            <person name="Lew H."/>
            <person name="Lin A."/>
            <person name="Lin D."/>
            <person name="Louis E.J."/>
            <person name="Marathe R."/>
            <person name="Messenguy F."/>
            <person name="Mewes H.-W."/>
            <person name="Mirtipati S."/>
            <person name="Moestl D."/>
            <person name="Mueller-Auer S."/>
            <person name="Namath A."/>
            <person name="Nentwich U."/>
            <person name="Oefner P."/>
            <person name="Pearson D."/>
            <person name="Petel F.X."/>
            <person name="Pohl T.M."/>
            <person name="Purnelle B."/>
            <person name="Rajandream M.A."/>
            <person name="Rechmann S."/>
            <person name="Rieger M."/>
            <person name="Riles L."/>
            <person name="Roberts D."/>
            <person name="Schaefer M."/>
            <person name="Scharfe M."/>
            <person name="Scherens B."/>
            <person name="Schramm S."/>
            <person name="Schroeder M."/>
            <person name="Sdicu A.-M."/>
            <person name="Tettelin H."/>
            <person name="Urrestarazu L.A."/>
            <person name="Ushinsky S."/>
            <person name="Vierendeels F."/>
            <person name="Vissers S."/>
            <person name="Voss H."/>
            <person name="Walsh S.V."/>
            <person name="Wambutt R."/>
            <person name="Wang Y."/>
            <person name="Wedler E."/>
            <person name="Wedler H."/>
            <person name="Winnett E."/>
            <person name="Zhong W.-W."/>
            <person name="Zollner A."/>
            <person name="Vo D.H."/>
            <person name="Hani J."/>
        </authorList>
    </citation>
    <scope>NUCLEOTIDE SEQUENCE [LARGE SCALE GENOMIC DNA]</scope>
    <source>
        <strain>ATCC 204508 / S288c</strain>
    </source>
</reference>
<reference key="3">
    <citation type="journal article" date="2014" name="G3 (Bethesda)">
        <title>The reference genome sequence of Saccharomyces cerevisiae: Then and now.</title>
        <authorList>
            <person name="Engel S.R."/>
            <person name="Dietrich F.S."/>
            <person name="Fisk D.G."/>
            <person name="Binkley G."/>
            <person name="Balakrishnan R."/>
            <person name="Costanzo M.C."/>
            <person name="Dwight S.S."/>
            <person name="Hitz B.C."/>
            <person name="Karra K."/>
            <person name="Nash R.S."/>
            <person name="Weng S."/>
            <person name="Wong E.D."/>
            <person name="Lloyd P."/>
            <person name="Skrzypek M.S."/>
            <person name="Miyasato S.R."/>
            <person name="Simison M."/>
            <person name="Cherry J.M."/>
        </authorList>
    </citation>
    <scope>GENOME REANNOTATION</scope>
    <source>
        <strain>ATCC 204508 / S288c</strain>
    </source>
</reference>
<reference key="4">
    <citation type="journal article" date="2003" name="Nature">
        <title>Global analysis of protein localization in budding yeast.</title>
        <authorList>
            <person name="Huh W.-K."/>
            <person name="Falvo J.V."/>
            <person name="Gerke L.C."/>
            <person name="Carroll A.S."/>
            <person name="Howson R.W."/>
            <person name="Weissman J.S."/>
            <person name="O'Shea E.K."/>
        </authorList>
    </citation>
    <scope>SUBCELLULAR LOCATION [LARGE SCALE ANALYSIS]</scope>
</reference>
<reference key="5">
    <citation type="journal article" date="2003" name="Nature">
        <title>Global analysis of protein expression in yeast.</title>
        <authorList>
            <person name="Ghaemmaghami S."/>
            <person name="Huh W.-K."/>
            <person name="Bower K."/>
            <person name="Howson R.W."/>
            <person name="Belle A."/>
            <person name="Dephoure N."/>
            <person name="O'Shea E.K."/>
            <person name="Weissman J.S."/>
        </authorList>
    </citation>
    <scope>LEVEL OF PROTEIN EXPRESSION [LARGE SCALE ANALYSIS]</scope>
</reference>
<reference key="6">
    <citation type="journal article" date="2003" name="Proc. Natl. Acad. Sci. U.S.A.">
        <title>The proteome of Saccharomyces cerevisiae mitochondria.</title>
        <authorList>
            <person name="Sickmann A."/>
            <person name="Reinders J."/>
            <person name="Wagner Y."/>
            <person name="Joppich C."/>
            <person name="Zahedi R.P."/>
            <person name="Meyer H.E."/>
            <person name="Schoenfisch B."/>
            <person name="Perschil I."/>
            <person name="Chacinska A."/>
            <person name="Guiard B."/>
            <person name="Rehling P."/>
            <person name="Pfanner N."/>
            <person name="Meisinger C."/>
        </authorList>
    </citation>
    <scope>SUBCELLULAR LOCATION [LARGE SCALE ANALYSIS]</scope>
    <source>
        <strain>ATCC 76625 / YPH499</strain>
    </source>
</reference>
<sequence>MGLPEVNFLRKNCILVELKLFYQTVYPPKELYWNNRITAELSTFSNIKYARPTFAVNNGTFQRTRPKLDLVLASSDIRKLATVLFNLKALIMNTKGEEPTLTTMTSVQTNEEKNDNLEQKYSSLLDRWNGKVEVHDSPFLQLQRDSNLLFAERPVRYVSTTEGEGVDISSEEFFRLEEEQCRRNYDVLVDEHSTPSVGMKDGQYGPNIIHFEPSLYHTYSSLPMSMKFWLNGLEDDETTMMNIDEKSAENLDILLHGFKGFSNKRVKG</sequence>
<comment type="function">
    <text evidence="4">Involved in splicing of intron aI5-beta of the mitochondrial COX1 transcript.</text>
</comment>
<comment type="subcellular location">
    <subcellularLocation>
        <location evidence="1 3">Mitochondrion</location>
    </subcellularLocation>
</comment>
<comment type="miscellaneous">
    <text evidence="2">Present with 861 molecules/cell in log phase SD medium.</text>
</comment>
<comment type="similarity">
    <text evidence="5">To baculovirus occlusion-derived virus envelope protein E27 (ODV-E27).</text>
</comment>
<dbReference type="EMBL" id="X07650">
    <property type="protein sequence ID" value="CAA30490.1"/>
    <property type="molecule type" value="Genomic_DNA"/>
</dbReference>
<dbReference type="EMBL" id="U40829">
    <property type="protein sequence ID" value="AAB68275.1"/>
    <property type="molecule type" value="Genomic_DNA"/>
</dbReference>
<dbReference type="EMBL" id="BK006949">
    <property type="protein sequence ID" value="DAA11547.1"/>
    <property type="molecule type" value="Genomic_DNA"/>
</dbReference>
<dbReference type="PIR" id="S00553">
    <property type="entry name" value="S00553"/>
</dbReference>
<dbReference type="RefSeq" id="NP_015460.1">
    <property type="nucleotide sequence ID" value="NM_001184231.1"/>
</dbReference>
<dbReference type="SMR" id="P08593"/>
<dbReference type="BioGRID" id="36301">
    <property type="interactions" value="228"/>
</dbReference>
<dbReference type="DIP" id="DIP-5396N"/>
<dbReference type="FunCoup" id="P08593">
    <property type="interactions" value="56"/>
</dbReference>
<dbReference type="IntAct" id="P08593">
    <property type="interactions" value="2"/>
</dbReference>
<dbReference type="MINT" id="P08593"/>
<dbReference type="STRING" id="4932.YPR134W"/>
<dbReference type="PaxDb" id="4932-YPR134W"/>
<dbReference type="PeptideAtlas" id="P08593"/>
<dbReference type="EnsemblFungi" id="YPR134W_mRNA">
    <property type="protein sequence ID" value="YPR134W"/>
    <property type="gene ID" value="YPR134W"/>
</dbReference>
<dbReference type="GeneID" id="856253"/>
<dbReference type="KEGG" id="sce:YPR134W"/>
<dbReference type="AGR" id="SGD:S000006338"/>
<dbReference type="SGD" id="S000006338">
    <property type="gene designation" value="MSS18"/>
</dbReference>
<dbReference type="VEuPathDB" id="FungiDB:YPR134W"/>
<dbReference type="eggNOG" id="ENOG502S6W5">
    <property type="taxonomic scope" value="Eukaryota"/>
</dbReference>
<dbReference type="HOGENOM" id="CLU_090748_0_0_1"/>
<dbReference type="InParanoid" id="P08593"/>
<dbReference type="OMA" id="KFIQNNC"/>
<dbReference type="OrthoDB" id="4038219at2759"/>
<dbReference type="BioCyc" id="YEAST:G3O-34270-MONOMER"/>
<dbReference type="BioGRID-ORCS" id="856253">
    <property type="hits" value="0 hits in 10 CRISPR screens"/>
</dbReference>
<dbReference type="PRO" id="PR:P08593"/>
<dbReference type="Proteomes" id="UP000002311">
    <property type="component" value="Chromosome XVI"/>
</dbReference>
<dbReference type="RNAct" id="P08593">
    <property type="molecule type" value="protein"/>
</dbReference>
<dbReference type="GO" id="GO:0005739">
    <property type="term" value="C:mitochondrion"/>
    <property type="evidence" value="ECO:0007005"/>
    <property type="project" value="SGD"/>
</dbReference>
<dbReference type="GO" id="GO:0000372">
    <property type="term" value="P:Group I intron splicing"/>
    <property type="evidence" value="ECO:0000314"/>
    <property type="project" value="SGD"/>
</dbReference>
<dbReference type="GO" id="GO:0090615">
    <property type="term" value="P:mitochondrial mRNA processing"/>
    <property type="evidence" value="ECO:0000315"/>
    <property type="project" value="SGD"/>
</dbReference>
<accession>P08593</accession>
<accession>D6W4D1</accession>
<evidence type="ECO:0000269" key="1">
    <source>
    </source>
</evidence>
<evidence type="ECO:0000269" key="2">
    <source>
    </source>
</evidence>
<evidence type="ECO:0000269" key="3">
    <source>
    </source>
</evidence>
<evidence type="ECO:0000269" key="4">
    <source>
    </source>
</evidence>
<evidence type="ECO:0000305" key="5"/>
<organism>
    <name type="scientific">Saccharomyces cerevisiae (strain ATCC 204508 / S288c)</name>
    <name type="common">Baker's yeast</name>
    <dbReference type="NCBI Taxonomy" id="559292"/>
    <lineage>
        <taxon>Eukaryota</taxon>
        <taxon>Fungi</taxon>
        <taxon>Dikarya</taxon>
        <taxon>Ascomycota</taxon>
        <taxon>Saccharomycotina</taxon>
        <taxon>Saccharomycetes</taxon>
        <taxon>Saccharomycetales</taxon>
        <taxon>Saccharomycetaceae</taxon>
        <taxon>Saccharomyces</taxon>
    </lineage>
</organism>
<feature type="chain" id="PRO_0000096602" description="Protein MSS18">
    <location>
        <begin position="1"/>
        <end position="268"/>
    </location>
</feature>
<protein>
    <recommendedName>
        <fullName>Protein MSS18</fullName>
    </recommendedName>
</protein>
<gene>
    <name type="primary">MSS18</name>
    <name type="ordered locus">YPR134W</name>
    <name type="ORF">P9659.8</name>
</gene>
<keyword id="KW-0496">Mitochondrion</keyword>
<keyword id="KW-0507">mRNA processing</keyword>
<keyword id="KW-0508">mRNA splicing</keyword>
<keyword id="KW-1185">Reference proteome</keyword>
<name>MSS18_YEAST</name>
<proteinExistence type="evidence at protein level"/>